<comment type="function">
    <text evidence="2">Forms conjugate with SPH1 and HBT1. Involved in morphogenesis.</text>
</comment>
<reference key="1">
    <citation type="journal article" date="1997" name="Nature">
        <title>The nucleotide sequence of Saccharomyces cerevisiae chromosome XIV and its evolutionary implications.</title>
        <authorList>
            <person name="Philippsen P."/>
            <person name="Kleine K."/>
            <person name="Poehlmann R."/>
            <person name="Duesterhoeft A."/>
            <person name="Hamberg K."/>
            <person name="Hegemann J.H."/>
            <person name="Obermaier B."/>
            <person name="Urrestarazu L.A."/>
            <person name="Aert R."/>
            <person name="Albermann K."/>
            <person name="Altmann R."/>
            <person name="Andre B."/>
            <person name="Baladron V."/>
            <person name="Ballesta J.P.G."/>
            <person name="Becam A.-M."/>
            <person name="Beinhauer J.D."/>
            <person name="Boskovic J."/>
            <person name="Buitrago M.J."/>
            <person name="Bussereau F."/>
            <person name="Coster F."/>
            <person name="Crouzet M."/>
            <person name="D'Angelo M."/>
            <person name="Dal Pero F."/>
            <person name="De Antoni A."/>
            <person name="del Rey F."/>
            <person name="Doignon F."/>
            <person name="Domdey H."/>
            <person name="Dubois E."/>
            <person name="Fiedler T.A."/>
            <person name="Fleig U."/>
            <person name="Floeth M."/>
            <person name="Fritz C."/>
            <person name="Gaillardin C."/>
            <person name="Garcia-Cantalejo J.M."/>
            <person name="Glansdorff N."/>
            <person name="Goffeau A."/>
            <person name="Gueldener U."/>
            <person name="Herbert C.J."/>
            <person name="Heumann K."/>
            <person name="Heuss-Neitzel D."/>
            <person name="Hilbert H."/>
            <person name="Hinni K."/>
            <person name="Iraqui Houssaini I."/>
            <person name="Jacquet M."/>
            <person name="Jimenez A."/>
            <person name="Jonniaux J.-L."/>
            <person name="Karpfinger-Hartl L."/>
            <person name="Lanfranchi G."/>
            <person name="Lepingle A."/>
            <person name="Levesque H."/>
            <person name="Lyck R."/>
            <person name="Maftahi M."/>
            <person name="Mallet L."/>
            <person name="Maurer C.T.C."/>
            <person name="Messenguy F."/>
            <person name="Mewes H.-W."/>
            <person name="Moestl D."/>
            <person name="Nasr F."/>
            <person name="Nicaud J.-M."/>
            <person name="Niedenthal R.K."/>
            <person name="Pandolfo D."/>
            <person name="Pierard A."/>
            <person name="Piravandi E."/>
            <person name="Planta R.J."/>
            <person name="Pohl T.M."/>
            <person name="Purnelle B."/>
            <person name="Rebischung C."/>
            <person name="Remacha M.A."/>
            <person name="Revuelta J.L."/>
            <person name="Rinke M."/>
            <person name="Saiz J.E."/>
            <person name="Sartorello F."/>
            <person name="Scherens B."/>
            <person name="Sen-Gupta M."/>
            <person name="Soler-Mira A."/>
            <person name="Urbanus J.H.M."/>
            <person name="Valle G."/>
            <person name="Van Dyck L."/>
            <person name="Verhasselt P."/>
            <person name="Vierendeels F."/>
            <person name="Vissers S."/>
            <person name="Voet M."/>
            <person name="Volckaert G."/>
            <person name="Wach A."/>
            <person name="Wambutt R."/>
            <person name="Wedler H."/>
            <person name="Zollner A."/>
            <person name="Hani J."/>
        </authorList>
    </citation>
    <scope>NUCLEOTIDE SEQUENCE [LARGE SCALE GENOMIC DNA]</scope>
    <source>
        <strain>ATCC 204508 / S288c</strain>
    </source>
</reference>
<reference key="2">
    <citation type="journal article" date="2014" name="G3 (Bethesda)">
        <title>The reference genome sequence of Saccharomyces cerevisiae: Then and now.</title>
        <authorList>
            <person name="Engel S.R."/>
            <person name="Dietrich F.S."/>
            <person name="Fisk D.G."/>
            <person name="Binkley G."/>
            <person name="Balakrishnan R."/>
            <person name="Costanzo M.C."/>
            <person name="Dwight S.S."/>
            <person name="Hitz B.C."/>
            <person name="Karra K."/>
            <person name="Nash R.S."/>
            <person name="Weng S."/>
            <person name="Wong E.D."/>
            <person name="Lloyd P."/>
            <person name="Skrzypek M.S."/>
            <person name="Miyasato S.R."/>
            <person name="Simison M."/>
            <person name="Cherry J.M."/>
        </authorList>
    </citation>
    <scope>GENOME REANNOTATION</scope>
    <source>
        <strain>ATCC 204508 / S288c</strain>
    </source>
</reference>
<reference key="3">
    <citation type="journal article" date="2007" name="Genome Res.">
        <title>Approaching a complete repository of sequence-verified protein-encoding clones for Saccharomyces cerevisiae.</title>
        <authorList>
            <person name="Hu Y."/>
            <person name="Rolfs A."/>
            <person name="Bhullar B."/>
            <person name="Murthy T.V.S."/>
            <person name="Zhu C."/>
            <person name="Berger M.F."/>
            <person name="Camargo A.A."/>
            <person name="Kelley F."/>
            <person name="McCarron S."/>
            <person name="Jepson D."/>
            <person name="Richardson A."/>
            <person name="Raphael J."/>
            <person name="Moreira D."/>
            <person name="Taycher E."/>
            <person name="Zuo D."/>
            <person name="Mohr S."/>
            <person name="Kane M.F."/>
            <person name="Williamson J."/>
            <person name="Simpson A.J.G."/>
            <person name="Bulyk M.L."/>
            <person name="Harlow E."/>
            <person name="Marsischky G."/>
            <person name="Kolodner R.D."/>
            <person name="LaBaer J."/>
        </authorList>
    </citation>
    <scope>NUCLEOTIDE SEQUENCE [GENOMIC DNA]</scope>
    <source>
        <strain>ATCC 204508 / S288c</strain>
    </source>
</reference>
<reference key="4">
    <citation type="journal article" date="2002" name="Science">
        <title>Role of a ubiquitin-like modification in polarized morphogenesis.</title>
        <authorList>
            <person name="Dittmar G.A.G."/>
            <person name="Wilkinson C.R.M."/>
            <person name="Jedrzejewski P.T."/>
            <person name="Finley D."/>
        </authorList>
    </citation>
    <scope>FUNCTION</scope>
</reference>
<reference key="5">
    <citation type="journal article" date="2012" name="Proc. Natl. Acad. Sci. U.S.A.">
        <title>N-terminal acetylome analyses and functional insights of the N-terminal acetyltransferase NatB.</title>
        <authorList>
            <person name="Van Damme P."/>
            <person name="Lasa M."/>
            <person name="Polevoda B."/>
            <person name="Gazquez C."/>
            <person name="Elosegui-Artola A."/>
            <person name="Kim D.S."/>
            <person name="De Juan-Pardo E."/>
            <person name="Demeyer K."/>
            <person name="Hole K."/>
            <person name="Larrea E."/>
            <person name="Timmerman E."/>
            <person name="Prieto J."/>
            <person name="Arnesen T."/>
            <person name="Sherman F."/>
            <person name="Gevaert K."/>
            <person name="Aldabe R."/>
        </authorList>
    </citation>
    <scope>IDENTIFICATION BY MASS SPECTROMETRY [LARGE SCALE ANALYSIS]</scope>
</reference>
<reference key="6">
    <citation type="journal article" date="2003" name="J. Struct. Funct. Genomics">
        <title>Solution structure of the yeast ubiquitin-like modifier protein Hub1.</title>
        <authorList>
            <person name="Ramelot T.A."/>
            <person name="Cort J.R."/>
            <person name="Yee A.A."/>
            <person name="Semesi A."/>
            <person name="Edwards A.M."/>
            <person name="Arrowsmith C.H."/>
            <person name="Kennedy M.A."/>
        </authorList>
    </citation>
    <scope>STRUCTURE BY NMR</scope>
</reference>
<protein>
    <recommendedName>
        <fullName>Ubiquitin-like modifier HUB1</fullName>
    </recommendedName>
</protein>
<dbReference type="EMBL" id="Z71648">
    <property type="status" value="NOT_ANNOTATED_CDS"/>
    <property type="molecule type" value="Genomic_DNA"/>
</dbReference>
<dbReference type="EMBL" id="AY558559">
    <property type="protein sequence ID" value="AAS56885.1"/>
    <property type="molecule type" value="Genomic_DNA"/>
</dbReference>
<dbReference type="EMBL" id="BK006947">
    <property type="protein sequence ID" value="DAA10573.1"/>
    <property type="molecule type" value="Genomic_DNA"/>
</dbReference>
<dbReference type="RefSeq" id="NP_014430.1">
    <property type="nucleotide sequence ID" value="NM_001184344.1"/>
</dbReference>
<dbReference type="PDB" id="1M94">
    <property type="method" value="NMR"/>
    <property type="chains" value="A=1-73"/>
</dbReference>
<dbReference type="PDB" id="3PLU">
    <property type="method" value="X-ray"/>
    <property type="resolution" value="1.40 A"/>
    <property type="chains" value="A/B=1-73"/>
</dbReference>
<dbReference type="PDB" id="3PLV">
    <property type="method" value="X-ray"/>
    <property type="resolution" value="1.90 A"/>
    <property type="chains" value="A=1-73"/>
</dbReference>
<dbReference type="PDBsum" id="1M94"/>
<dbReference type="PDBsum" id="3PLU"/>
<dbReference type="PDBsum" id="3PLV"/>
<dbReference type="BMRB" id="Q6Q546"/>
<dbReference type="SMR" id="Q6Q546"/>
<dbReference type="BioGRID" id="35857">
    <property type="interactions" value="142"/>
</dbReference>
<dbReference type="FunCoup" id="Q6Q546">
    <property type="interactions" value="423"/>
</dbReference>
<dbReference type="IntAct" id="Q6Q546">
    <property type="interactions" value="1"/>
</dbReference>
<dbReference type="STRING" id="4932.YNR032C-A"/>
<dbReference type="PaxDb" id="4932-YNR032C-A"/>
<dbReference type="PeptideAtlas" id="Q6Q546"/>
<dbReference type="DNASU" id="855767"/>
<dbReference type="EnsemblFungi" id="YNR032C-A_mRNA">
    <property type="protein sequence ID" value="YNR032C-A"/>
    <property type="gene ID" value="YNR032C-A"/>
</dbReference>
<dbReference type="GeneID" id="855767"/>
<dbReference type="KEGG" id="sce:YNR032C-A"/>
<dbReference type="AGR" id="SGD:S000007251"/>
<dbReference type="SGD" id="S000007251">
    <property type="gene designation" value="HUB1"/>
</dbReference>
<dbReference type="VEuPathDB" id="FungiDB:YNR032C-A"/>
<dbReference type="eggNOG" id="KOG3493">
    <property type="taxonomic scope" value="Eukaryota"/>
</dbReference>
<dbReference type="GeneTree" id="ENSGT00390000001945"/>
<dbReference type="HOGENOM" id="CLU_156193_2_0_1"/>
<dbReference type="InParanoid" id="Q6Q546"/>
<dbReference type="OMA" id="GMSLEMQ"/>
<dbReference type="OrthoDB" id="3881at2759"/>
<dbReference type="BioCyc" id="YEAST:G3O-33397-MONOMER"/>
<dbReference type="BioGRID-ORCS" id="855767">
    <property type="hits" value="2 hits in 10 CRISPR screens"/>
</dbReference>
<dbReference type="EvolutionaryTrace" id="Q6Q546"/>
<dbReference type="PRO" id="PR:Q6Q546"/>
<dbReference type="Proteomes" id="UP000002311">
    <property type="component" value="Chromosome XIV"/>
</dbReference>
<dbReference type="RNAct" id="Q6Q546">
    <property type="molecule type" value="protein"/>
</dbReference>
<dbReference type="GO" id="GO:0005737">
    <property type="term" value="C:cytoplasm"/>
    <property type="evidence" value="ECO:0000318"/>
    <property type="project" value="GO_Central"/>
</dbReference>
<dbReference type="GO" id="GO:0005634">
    <property type="term" value="C:nucleus"/>
    <property type="evidence" value="ECO:0000318"/>
    <property type="project" value="GO_Central"/>
</dbReference>
<dbReference type="GO" id="GO:0031386">
    <property type="term" value="F:protein tag activity"/>
    <property type="evidence" value="ECO:0000314"/>
    <property type="project" value="SGD"/>
</dbReference>
<dbReference type="GO" id="GO:0000753">
    <property type="term" value="P:cell morphogenesis involved in conjugation with cellular fusion"/>
    <property type="evidence" value="ECO:0000315"/>
    <property type="project" value="SGD"/>
</dbReference>
<dbReference type="GO" id="GO:0000398">
    <property type="term" value="P:mRNA splicing, via spliceosome"/>
    <property type="evidence" value="ECO:0000353"/>
    <property type="project" value="SGD"/>
</dbReference>
<dbReference type="GO" id="GO:0033120">
    <property type="term" value="P:positive regulation of RNA splicing"/>
    <property type="evidence" value="ECO:0000315"/>
    <property type="project" value="SGD"/>
</dbReference>
<dbReference type="GO" id="GO:0043687">
    <property type="term" value="P:post-translational protein modification"/>
    <property type="evidence" value="ECO:0000314"/>
    <property type="project" value="SGD"/>
</dbReference>
<dbReference type="GO" id="GO:0036211">
    <property type="term" value="P:protein modification process"/>
    <property type="evidence" value="ECO:0000318"/>
    <property type="project" value="GO_Central"/>
</dbReference>
<dbReference type="CDD" id="cd01791">
    <property type="entry name" value="Ubl_UBL5"/>
    <property type="match status" value="1"/>
</dbReference>
<dbReference type="FunFam" id="3.10.20.90:FF:000052">
    <property type="entry name" value="Ubiquitin-like protein 5"/>
    <property type="match status" value="1"/>
</dbReference>
<dbReference type="Gene3D" id="3.10.20.90">
    <property type="entry name" value="Phosphatidylinositol 3-kinase Catalytic Subunit, Chain A, domain 1"/>
    <property type="match status" value="1"/>
</dbReference>
<dbReference type="InterPro" id="IPR039732">
    <property type="entry name" value="Hub1/Ubl5"/>
</dbReference>
<dbReference type="InterPro" id="IPR000626">
    <property type="entry name" value="Ubiquitin-like_dom"/>
</dbReference>
<dbReference type="InterPro" id="IPR029071">
    <property type="entry name" value="Ubiquitin-like_domsf"/>
</dbReference>
<dbReference type="PANTHER" id="PTHR13042">
    <property type="entry name" value="UBIQUITIN-LIKE PROTEIN 5"/>
    <property type="match status" value="1"/>
</dbReference>
<dbReference type="Pfam" id="PF00240">
    <property type="entry name" value="ubiquitin"/>
    <property type="match status" value="1"/>
</dbReference>
<dbReference type="SUPFAM" id="SSF54236">
    <property type="entry name" value="Ubiquitin-like"/>
    <property type="match status" value="1"/>
</dbReference>
<dbReference type="PROSITE" id="PS50053">
    <property type="entry name" value="UBIQUITIN_2"/>
    <property type="match status" value="1"/>
</dbReference>
<keyword id="KW-0002">3D-structure</keyword>
<keyword id="KW-1185">Reference proteome</keyword>
<keyword id="KW-0833">Ubl conjugation pathway</keyword>
<evidence type="ECO:0000255" key="1">
    <source>
        <dbReference type="PROSITE-ProRule" id="PRU00214"/>
    </source>
</evidence>
<evidence type="ECO:0000269" key="2">
    <source>
    </source>
</evidence>
<evidence type="ECO:0000305" key="3"/>
<evidence type="ECO:0007829" key="4">
    <source>
        <dbReference type="PDB" id="1M94"/>
    </source>
</evidence>
<evidence type="ECO:0007829" key="5">
    <source>
        <dbReference type="PDB" id="3PLU"/>
    </source>
</evidence>
<name>HUB1_YEAST</name>
<accession>Q6Q546</accession>
<accession>D6W1K7</accession>
<organism>
    <name type="scientific">Saccharomyces cerevisiae (strain ATCC 204508 / S288c)</name>
    <name type="common">Baker's yeast</name>
    <dbReference type="NCBI Taxonomy" id="559292"/>
    <lineage>
        <taxon>Eukaryota</taxon>
        <taxon>Fungi</taxon>
        <taxon>Dikarya</taxon>
        <taxon>Ascomycota</taxon>
        <taxon>Saccharomycotina</taxon>
        <taxon>Saccharomycetes</taxon>
        <taxon>Saccharomycetales</taxon>
        <taxon>Saccharomycetaceae</taxon>
        <taxon>Saccharomyces</taxon>
    </lineage>
</organism>
<proteinExistence type="evidence at protein level"/>
<sequence length="73" mass="8272">MIEVVVNDRLGKKVRVKCLAEDSVGDFKKVLSLQIGTQPNKIVLQKGGSVLKDHISLEDYEVHDQTNLELYYL</sequence>
<gene>
    <name type="primary">HUB1</name>
    <name type="ordered locus">YNR032C-A</name>
</gene>
<feature type="chain" id="PRO_0000114879" description="Ubiquitin-like modifier HUB1">
    <location>
        <begin position="1"/>
        <end position="73"/>
    </location>
</feature>
<feature type="domain" description="Ubiquitin-like" evidence="1">
    <location>
        <begin position="1"/>
        <end position="73"/>
    </location>
</feature>
<feature type="sequence conflict" description="In Ref. 3; AAS56885." evidence="3" ref="3">
    <original>K</original>
    <variation>E</variation>
    <location>
        <position position="12"/>
    </location>
</feature>
<feature type="strand" evidence="5">
    <location>
        <begin position="1"/>
        <end position="7"/>
    </location>
</feature>
<feature type="turn" evidence="4">
    <location>
        <begin position="9"/>
        <end position="11"/>
    </location>
</feature>
<feature type="strand" evidence="5">
    <location>
        <begin position="13"/>
        <end position="19"/>
    </location>
</feature>
<feature type="helix" evidence="5">
    <location>
        <begin position="24"/>
        <end position="35"/>
    </location>
</feature>
<feature type="helix" evidence="5">
    <location>
        <begin position="39"/>
        <end position="41"/>
    </location>
</feature>
<feature type="strand" evidence="5">
    <location>
        <begin position="42"/>
        <end position="46"/>
    </location>
</feature>
<feature type="helix" evidence="5">
    <location>
        <begin position="58"/>
        <end position="60"/>
    </location>
</feature>
<feature type="strand" evidence="5">
    <location>
        <begin position="67"/>
        <end position="72"/>
    </location>
</feature>